<protein>
    <recommendedName>
        <fullName evidence="1">Argininosuccinate synthase</fullName>
        <ecNumber evidence="1">6.3.4.5</ecNumber>
    </recommendedName>
    <alternativeName>
        <fullName evidence="1">Citrulline--aspartate ligase</fullName>
    </alternativeName>
</protein>
<organism>
    <name type="scientific">Novosphingobium aromaticivorans (strain ATCC 700278 / DSM 12444 / CCUG 56034 / CIP 105152 / NBRC 16084 / F199)</name>
    <dbReference type="NCBI Taxonomy" id="279238"/>
    <lineage>
        <taxon>Bacteria</taxon>
        <taxon>Pseudomonadati</taxon>
        <taxon>Pseudomonadota</taxon>
        <taxon>Alphaproteobacteria</taxon>
        <taxon>Sphingomonadales</taxon>
        <taxon>Sphingomonadaceae</taxon>
        <taxon>Novosphingobium</taxon>
    </lineage>
</organism>
<gene>
    <name evidence="1" type="primary">argG</name>
    <name type="ordered locus">Saro_1195</name>
</gene>
<reference key="1">
    <citation type="submission" date="2006-01" db="EMBL/GenBank/DDBJ databases">
        <title>Complete sequence of Novosphingobium aromaticivorans DSM 12444.</title>
        <authorList>
            <consortium name="US DOE Joint Genome Institute"/>
            <person name="Copeland A."/>
            <person name="Lucas S."/>
            <person name="Lapidus A."/>
            <person name="Barry K."/>
            <person name="Detter J.C."/>
            <person name="Glavina T."/>
            <person name="Hammon N."/>
            <person name="Israni S."/>
            <person name="Pitluck S."/>
            <person name="Chain P."/>
            <person name="Malfatti S."/>
            <person name="Shin M."/>
            <person name="Vergez L."/>
            <person name="Schmutz J."/>
            <person name="Larimer F."/>
            <person name="Land M."/>
            <person name="Kyrpides N."/>
            <person name="Ivanova N."/>
            <person name="Fredrickson J."/>
            <person name="Balkwill D."/>
            <person name="Romine M.F."/>
            <person name="Richardson P."/>
        </authorList>
    </citation>
    <scope>NUCLEOTIDE SEQUENCE [LARGE SCALE GENOMIC DNA]</scope>
    <source>
        <strain>ATCC 700278 / DSM 12444 / CCUG 56034 / CIP 105152 / NBRC 16084 / F199</strain>
    </source>
</reference>
<comment type="catalytic activity">
    <reaction evidence="1">
        <text>L-citrulline + L-aspartate + ATP = 2-(N(omega)-L-arginino)succinate + AMP + diphosphate + H(+)</text>
        <dbReference type="Rhea" id="RHEA:10932"/>
        <dbReference type="ChEBI" id="CHEBI:15378"/>
        <dbReference type="ChEBI" id="CHEBI:29991"/>
        <dbReference type="ChEBI" id="CHEBI:30616"/>
        <dbReference type="ChEBI" id="CHEBI:33019"/>
        <dbReference type="ChEBI" id="CHEBI:57472"/>
        <dbReference type="ChEBI" id="CHEBI:57743"/>
        <dbReference type="ChEBI" id="CHEBI:456215"/>
        <dbReference type="EC" id="6.3.4.5"/>
    </reaction>
</comment>
<comment type="pathway">
    <text evidence="1">Amino-acid biosynthesis; L-arginine biosynthesis; L-arginine from L-ornithine and carbamoyl phosphate: step 2/3.</text>
</comment>
<comment type="subunit">
    <text evidence="1">Homotetramer.</text>
</comment>
<comment type="subcellular location">
    <subcellularLocation>
        <location evidence="1">Cytoplasm</location>
    </subcellularLocation>
</comment>
<comment type="similarity">
    <text evidence="1">Belongs to the argininosuccinate synthase family. Type 1 subfamily.</text>
</comment>
<dbReference type="EC" id="6.3.4.5" evidence="1"/>
<dbReference type="EMBL" id="CP000248">
    <property type="protein sequence ID" value="ABD25640.1"/>
    <property type="molecule type" value="Genomic_DNA"/>
</dbReference>
<dbReference type="RefSeq" id="WP_011444854.1">
    <property type="nucleotide sequence ID" value="NC_007794.1"/>
</dbReference>
<dbReference type="SMR" id="Q2G933"/>
<dbReference type="STRING" id="279238.Saro_1195"/>
<dbReference type="KEGG" id="nar:Saro_1195"/>
<dbReference type="eggNOG" id="COG0137">
    <property type="taxonomic scope" value="Bacteria"/>
</dbReference>
<dbReference type="HOGENOM" id="CLU_032784_4_2_5"/>
<dbReference type="UniPathway" id="UPA00068">
    <property type="reaction ID" value="UER00113"/>
</dbReference>
<dbReference type="Proteomes" id="UP000009134">
    <property type="component" value="Chromosome"/>
</dbReference>
<dbReference type="GO" id="GO:0005737">
    <property type="term" value="C:cytoplasm"/>
    <property type="evidence" value="ECO:0007669"/>
    <property type="project" value="UniProtKB-SubCell"/>
</dbReference>
<dbReference type="GO" id="GO:0004055">
    <property type="term" value="F:argininosuccinate synthase activity"/>
    <property type="evidence" value="ECO:0007669"/>
    <property type="project" value="UniProtKB-UniRule"/>
</dbReference>
<dbReference type="GO" id="GO:0005524">
    <property type="term" value="F:ATP binding"/>
    <property type="evidence" value="ECO:0007669"/>
    <property type="project" value="UniProtKB-UniRule"/>
</dbReference>
<dbReference type="GO" id="GO:0000053">
    <property type="term" value="P:argininosuccinate metabolic process"/>
    <property type="evidence" value="ECO:0007669"/>
    <property type="project" value="TreeGrafter"/>
</dbReference>
<dbReference type="GO" id="GO:0006526">
    <property type="term" value="P:L-arginine biosynthetic process"/>
    <property type="evidence" value="ECO:0007669"/>
    <property type="project" value="UniProtKB-UniRule"/>
</dbReference>
<dbReference type="GO" id="GO:0000050">
    <property type="term" value="P:urea cycle"/>
    <property type="evidence" value="ECO:0007669"/>
    <property type="project" value="TreeGrafter"/>
</dbReference>
<dbReference type="CDD" id="cd01999">
    <property type="entry name" value="ASS"/>
    <property type="match status" value="1"/>
</dbReference>
<dbReference type="FunFam" id="3.40.50.620:FF:000019">
    <property type="entry name" value="Argininosuccinate synthase"/>
    <property type="match status" value="1"/>
</dbReference>
<dbReference type="FunFam" id="3.90.1260.10:FF:000007">
    <property type="entry name" value="Argininosuccinate synthase"/>
    <property type="match status" value="1"/>
</dbReference>
<dbReference type="Gene3D" id="3.90.1260.10">
    <property type="entry name" value="Argininosuccinate synthetase, chain A, domain 2"/>
    <property type="match status" value="1"/>
</dbReference>
<dbReference type="Gene3D" id="3.40.50.620">
    <property type="entry name" value="HUPs"/>
    <property type="match status" value="1"/>
</dbReference>
<dbReference type="Gene3D" id="1.20.5.470">
    <property type="entry name" value="Single helix bin"/>
    <property type="match status" value="1"/>
</dbReference>
<dbReference type="HAMAP" id="MF_00005">
    <property type="entry name" value="Arg_succ_synth_type1"/>
    <property type="match status" value="1"/>
</dbReference>
<dbReference type="InterPro" id="IPR048268">
    <property type="entry name" value="Arginosuc_syn_C"/>
</dbReference>
<dbReference type="InterPro" id="IPR048267">
    <property type="entry name" value="Arginosuc_syn_N"/>
</dbReference>
<dbReference type="InterPro" id="IPR001518">
    <property type="entry name" value="Arginosuc_synth"/>
</dbReference>
<dbReference type="InterPro" id="IPR018223">
    <property type="entry name" value="Arginosuc_synth_CS"/>
</dbReference>
<dbReference type="InterPro" id="IPR023434">
    <property type="entry name" value="Arginosuc_synth_type_1_subfam"/>
</dbReference>
<dbReference type="InterPro" id="IPR024074">
    <property type="entry name" value="AS_cat/multimer_dom_body"/>
</dbReference>
<dbReference type="InterPro" id="IPR014729">
    <property type="entry name" value="Rossmann-like_a/b/a_fold"/>
</dbReference>
<dbReference type="NCBIfam" id="TIGR00032">
    <property type="entry name" value="argG"/>
    <property type="match status" value="1"/>
</dbReference>
<dbReference type="NCBIfam" id="NF001770">
    <property type="entry name" value="PRK00509.1"/>
    <property type="match status" value="1"/>
</dbReference>
<dbReference type="PANTHER" id="PTHR11587">
    <property type="entry name" value="ARGININOSUCCINATE SYNTHASE"/>
    <property type="match status" value="1"/>
</dbReference>
<dbReference type="PANTHER" id="PTHR11587:SF2">
    <property type="entry name" value="ARGININOSUCCINATE SYNTHASE"/>
    <property type="match status" value="1"/>
</dbReference>
<dbReference type="Pfam" id="PF20979">
    <property type="entry name" value="Arginosuc_syn_C"/>
    <property type="match status" value="1"/>
</dbReference>
<dbReference type="Pfam" id="PF00764">
    <property type="entry name" value="Arginosuc_synth"/>
    <property type="match status" value="1"/>
</dbReference>
<dbReference type="SUPFAM" id="SSF52402">
    <property type="entry name" value="Adenine nucleotide alpha hydrolases-like"/>
    <property type="match status" value="1"/>
</dbReference>
<dbReference type="SUPFAM" id="SSF69864">
    <property type="entry name" value="Argininosuccinate synthetase, C-terminal domain"/>
    <property type="match status" value="1"/>
</dbReference>
<dbReference type="PROSITE" id="PS00564">
    <property type="entry name" value="ARGININOSUCCIN_SYN_1"/>
    <property type="match status" value="1"/>
</dbReference>
<dbReference type="PROSITE" id="PS00565">
    <property type="entry name" value="ARGININOSUCCIN_SYN_2"/>
    <property type="match status" value="1"/>
</dbReference>
<keyword id="KW-0028">Amino-acid biosynthesis</keyword>
<keyword id="KW-0055">Arginine biosynthesis</keyword>
<keyword id="KW-0067">ATP-binding</keyword>
<keyword id="KW-0963">Cytoplasm</keyword>
<keyword id="KW-0436">Ligase</keyword>
<keyword id="KW-0547">Nucleotide-binding</keyword>
<keyword id="KW-1185">Reference proteome</keyword>
<feature type="chain" id="PRO_0000263946" description="Argininosuccinate synthase">
    <location>
        <begin position="1"/>
        <end position="404"/>
    </location>
</feature>
<feature type="region of interest" description="Disordered" evidence="2">
    <location>
        <begin position="173"/>
        <end position="200"/>
    </location>
</feature>
<feature type="compositionally biased region" description="Polar residues" evidence="2">
    <location>
        <begin position="179"/>
        <end position="192"/>
    </location>
</feature>
<feature type="binding site" evidence="1">
    <location>
        <begin position="10"/>
        <end position="18"/>
    </location>
    <ligand>
        <name>ATP</name>
        <dbReference type="ChEBI" id="CHEBI:30616"/>
    </ligand>
</feature>
<feature type="binding site" evidence="1">
    <location>
        <position position="37"/>
    </location>
    <ligand>
        <name>ATP</name>
        <dbReference type="ChEBI" id="CHEBI:30616"/>
    </ligand>
</feature>
<feature type="binding site" evidence="1">
    <location>
        <position position="90"/>
    </location>
    <ligand>
        <name>L-citrulline</name>
        <dbReference type="ChEBI" id="CHEBI:57743"/>
    </ligand>
</feature>
<feature type="binding site" evidence="1">
    <location>
        <position position="95"/>
    </location>
    <ligand>
        <name>L-citrulline</name>
        <dbReference type="ChEBI" id="CHEBI:57743"/>
    </ligand>
</feature>
<feature type="binding site" evidence="1">
    <location>
        <position position="120"/>
    </location>
    <ligand>
        <name>ATP</name>
        <dbReference type="ChEBI" id="CHEBI:30616"/>
    </ligand>
</feature>
<feature type="binding site" evidence="1">
    <location>
        <position position="122"/>
    </location>
    <ligand>
        <name>L-aspartate</name>
        <dbReference type="ChEBI" id="CHEBI:29991"/>
    </ligand>
</feature>
<feature type="binding site" evidence="1">
    <location>
        <position position="126"/>
    </location>
    <ligand>
        <name>L-aspartate</name>
        <dbReference type="ChEBI" id="CHEBI:29991"/>
    </ligand>
</feature>
<feature type="binding site" evidence="1">
    <location>
        <position position="126"/>
    </location>
    <ligand>
        <name>L-citrulline</name>
        <dbReference type="ChEBI" id="CHEBI:57743"/>
    </ligand>
</feature>
<feature type="binding site" evidence="1">
    <location>
        <position position="127"/>
    </location>
    <ligand>
        <name>L-aspartate</name>
        <dbReference type="ChEBI" id="CHEBI:29991"/>
    </ligand>
</feature>
<feature type="binding site" evidence="1">
    <location>
        <position position="130"/>
    </location>
    <ligand>
        <name>L-citrulline</name>
        <dbReference type="ChEBI" id="CHEBI:57743"/>
    </ligand>
</feature>
<feature type="binding site" evidence="1">
    <location>
        <position position="181"/>
    </location>
    <ligand>
        <name>L-citrulline</name>
        <dbReference type="ChEBI" id="CHEBI:57743"/>
    </ligand>
</feature>
<feature type="binding site" evidence="1">
    <location>
        <position position="190"/>
    </location>
    <ligand>
        <name>L-citrulline</name>
        <dbReference type="ChEBI" id="CHEBI:57743"/>
    </ligand>
</feature>
<feature type="binding site" evidence="1">
    <location>
        <position position="266"/>
    </location>
    <ligand>
        <name>L-citrulline</name>
        <dbReference type="ChEBI" id="CHEBI:57743"/>
    </ligand>
</feature>
<feature type="binding site" evidence="1">
    <location>
        <position position="278"/>
    </location>
    <ligand>
        <name>L-citrulline</name>
        <dbReference type="ChEBI" id="CHEBI:57743"/>
    </ligand>
</feature>
<evidence type="ECO:0000255" key="1">
    <source>
        <dbReference type="HAMAP-Rule" id="MF_00005"/>
    </source>
</evidence>
<evidence type="ECO:0000256" key="2">
    <source>
        <dbReference type="SAM" id="MobiDB-lite"/>
    </source>
</evidence>
<sequence>MSDIKKVVLAYSGGLDTSVILKWLQVTYNCEVVTFTADLGQGEELEPARAKAKLMGVPDHHIYIDDLREEFVRDFVFPMMRANARYEGDYLLGTSIARPLISKRLIEIARETGADAVAHGATGKGNDQVRFELSAYALEPGIKVIAPWREWDLTSRTALIAWAEAHQIPVPKDKRGESPFSTDANLLHTSSEGKVLEDPWQETPDYVYSRTVNPEDAPDTPEYITIDFEKGDGVALNGEAMSPATLLAALNDLGRKHGIGRLDLVENRFVGMKSRGMYETPGGEIYARAHRGIESITLDRGAAHLKDELMPKYAELIYNGFWFSPEREMLQAAIDHSQARVNGTVRLKLYKGSASVVGRKSPDSLYSERHVTFEDDAGAYDQKDAAGFIKLNALRLRLLAQQGR</sequence>
<name>ASSY_NOVAD</name>
<proteinExistence type="inferred from homology"/>
<accession>Q2G933</accession>